<evidence type="ECO:0000250" key="1"/>
<evidence type="ECO:0000305" key="2"/>
<gene>
    <name type="primary">rpcA</name>
</gene>
<feature type="initiator methionine" description="Removed" evidence="1">
    <location>
        <position position="1"/>
    </location>
</feature>
<feature type="chain" id="PRO_0000199140" description="R-phycocyanin-2 subunit alpha">
    <location>
        <begin position="2"/>
        <end position="162"/>
    </location>
</feature>
<feature type="binding site" description="covalent" evidence="1">
    <location>
        <position position="84"/>
    </location>
    <ligand>
        <name>(2R,3E)-phycoerythrobilin</name>
        <dbReference type="ChEBI" id="CHEBI:85276"/>
    </ligand>
</feature>
<protein>
    <recommendedName>
        <fullName>R-phycocyanin-2 subunit alpha</fullName>
    </recommendedName>
    <alternativeName>
        <fullName>R-phycocyanin II alpha chain</fullName>
    </alternativeName>
</protein>
<name>PHRA_SYNPY</name>
<reference key="1">
    <citation type="journal article" date="1993" name="Plant Mol. Biol.">
        <title>Genes of the R-phycocyanin II locus of marine Synechococcus spp., and comparison of protein-chromophore interactions in phycocyanins differing in bilin composition.</title>
        <authorList>
            <person name="de Lorimier R."/>
            <person name="Wilbanks S.M."/>
            <person name="Glazer A.N."/>
        </authorList>
    </citation>
    <scope>NUCLEOTIDE SEQUENCE [GENOMIC DNA]</scope>
</reference>
<dbReference type="EMBL" id="M95288">
    <property type="protein sequence ID" value="AAA27346.1"/>
    <property type="molecule type" value="Genomic_DNA"/>
</dbReference>
<dbReference type="SMR" id="Q02182"/>
<dbReference type="STRING" id="32052.WB44_13625"/>
<dbReference type="OrthoDB" id="466183at2"/>
<dbReference type="GO" id="GO:0030089">
    <property type="term" value="C:phycobilisome"/>
    <property type="evidence" value="ECO:0007669"/>
    <property type="project" value="UniProtKB-KW"/>
</dbReference>
<dbReference type="GO" id="GO:0031676">
    <property type="term" value="C:plasma membrane-derived thylakoid membrane"/>
    <property type="evidence" value="ECO:0007669"/>
    <property type="project" value="UniProtKB-SubCell"/>
</dbReference>
<dbReference type="GO" id="GO:0015979">
    <property type="term" value="P:photosynthesis"/>
    <property type="evidence" value="ECO:0007669"/>
    <property type="project" value="UniProtKB-KW"/>
</dbReference>
<dbReference type="CDD" id="cd14770">
    <property type="entry name" value="PC-PEC_alpha"/>
    <property type="match status" value="1"/>
</dbReference>
<dbReference type="Gene3D" id="1.10.490.20">
    <property type="entry name" value="Phycocyanins"/>
    <property type="match status" value="1"/>
</dbReference>
<dbReference type="InterPro" id="IPR009050">
    <property type="entry name" value="Globin-like_sf"/>
</dbReference>
<dbReference type="InterPro" id="IPR012128">
    <property type="entry name" value="Phycobilisome_asu/bsu"/>
</dbReference>
<dbReference type="InterPro" id="IPR038719">
    <property type="entry name" value="Phycobilisome_asu/bsu_sf"/>
</dbReference>
<dbReference type="InterPro" id="IPR006246">
    <property type="entry name" value="Phycocyanin_a"/>
</dbReference>
<dbReference type="NCBIfam" id="TIGR01338">
    <property type="entry name" value="phycocy_alpha"/>
    <property type="match status" value="1"/>
</dbReference>
<dbReference type="PANTHER" id="PTHR34011:SF4">
    <property type="entry name" value="C-PHYCOCYANIN ALPHA SUBUNIT"/>
    <property type="match status" value="1"/>
</dbReference>
<dbReference type="PANTHER" id="PTHR34011">
    <property type="entry name" value="PHYCOBILISOME 32.1 KDA LINKER POLYPEPTIDE, PHYCOCYANIN-ASSOCIATED, ROD 2-RELATED"/>
    <property type="match status" value="1"/>
</dbReference>
<dbReference type="Pfam" id="PF00502">
    <property type="entry name" value="Phycobilisome"/>
    <property type="match status" value="1"/>
</dbReference>
<dbReference type="PIRSF" id="PIRSF000081">
    <property type="entry name" value="Phycocyanin"/>
    <property type="match status" value="1"/>
</dbReference>
<dbReference type="SUPFAM" id="SSF46458">
    <property type="entry name" value="Globin-like"/>
    <property type="match status" value="1"/>
</dbReference>
<organism>
    <name type="scientific">Synechococcus sp. (strain WH8020)</name>
    <dbReference type="NCBI Taxonomy" id="32052"/>
    <lineage>
        <taxon>Bacteria</taxon>
        <taxon>Bacillati</taxon>
        <taxon>Cyanobacteriota</taxon>
        <taxon>Cyanophyceae</taxon>
        <taxon>Synechococcales</taxon>
        <taxon>Synechococcaceae</taxon>
        <taxon>Synechococcus</taxon>
    </lineage>
</organism>
<proteinExistence type="inferred from homology"/>
<comment type="function">
    <text>Light-harvesting photosynthetic bile pigment-protein from the phycobiliprotein complex.</text>
</comment>
<comment type="subunit">
    <text evidence="1">Heterodimer of an alpha and a beta chain.</text>
</comment>
<comment type="subcellular location">
    <subcellularLocation>
        <location evidence="1">Cellular thylakoid membrane</location>
        <topology evidence="1">Peripheral membrane protein</topology>
        <orientation evidence="1">Cytoplasmic side</orientation>
    </subcellularLocation>
    <text evidence="1">Part of the phycobilisome rod.</text>
</comment>
<comment type="PTM">
    <text evidence="1">Contains one covalently linked bilin chromophore.</text>
</comment>
<comment type="similarity">
    <text evidence="2">Belongs to the phycobiliprotein family.</text>
</comment>
<keyword id="KW-0042">Antenna complex</keyword>
<keyword id="KW-0089">Bile pigment</keyword>
<keyword id="KW-0157">Chromophore</keyword>
<keyword id="KW-0249">Electron transport</keyword>
<keyword id="KW-0472">Membrane</keyword>
<keyword id="KW-0602">Photosynthesis</keyword>
<keyword id="KW-0605">Phycobilisome</keyword>
<keyword id="KW-0793">Thylakoid</keyword>
<keyword id="KW-0813">Transport</keyword>
<sequence length="162" mass="17369">MKTPLTEAVAAADSQGRFLSNTEVQAASGRFNRAKASLEAAKGLTAKADSLVSSATQAVYTKFPYTTQMEGPNYSATSEGKAKCSRDIGYYLRMITYCLVAGGTGPMDDYLIAGLDEINRTFELSPSWYVEALKHIQSNHGLSGDAATEANSYINYAINALT</sequence>
<accession>Q02182</accession>